<keyword id="KW-0025">Alternative splicing</keyword>
<keyword id="KW-1015">Disulfide bond</keyword>
<keyword id="KW-0265">Erythrocyte maturation</keyword>
<keyword id="KW-0372">Hormone</keyword>
<keyword id="KW-1185">Reference proteome</keyword>
<keyword id="KW-0964">Secreted</keyword>
<keyword id="KW-0732">Signal</keyword>
<comment type="function">
    <text evidence="1">Erythropoietin is the principal hormone involved in the regulation of erythrocyte differentiation and the maintenance of a physiological level of circulating erythrocyte mass.</text>
</comment>
<comment type="subcellular location">
    <subcellularLocation>
        <location evidence="1">Secreted</location>
    </subcellularLocation>
</comment>
<comment type="alternative products">
    <event type="alternative splicing"/>
    <isoform>
        <id>Q6JV22-1</id>
        <name>1</name>
        <sequence type="displayed"/>
    </isoform>
    <isoform>
        <id>Q6JV22-2</id>
        <name>2</name>
        <sequence type="described" ref="VSP_030095"/>
    </isoform>
</comment>
<comment type="tissue specificity">
    <text evidence="3">Expressed mainly in heart, liver and brain. Isoform 2 is brain specific.</text>
</comment>
<comment type="similarity">
    <text evidence="4">Belongs to the EPO/TPO family.</text>
</comment>
<protein>
    <recommendedName>
        <fullName>Erythropoietin</fullName>
    </recommendedName>
</protein>
<reference key="1">
    <citation type="journal article" date="2004" name="Blood">
        <title>Erythropoietin gene from a teleost fish, Fugu rubripes.</title>
        <authorList>
            <person name="Chou C.-F."/>
            <person name="Tohari S."/>
            <person name="Brenner S."/>
            <person name="Venkatesh B."/>
        </authorList>
    </citation>
    <scope>NUCLEOTIDE SEQUENCE [GENOMIC DNA]</scope>
    <scope>TISSUE SPECIFICITY</scope>
    <scope>ALTERNATIVE SPLICING</scope>
</reference>
<accession>Q6JV22</accession>
<accession>Q6JV23</accession>
<sequence>MLQKTGRGLLAFLLIVLEWTQPSLPSPLRPICDLRVLNHFIKEAQDAEAAMKLCSEGCTLSDSVIVPQTTVEFDVWEKKSALAKAQEVQSGLWLLQEAFNFLRTSVTNTALHSHIDNSVRNLLSVNAVLRSLNIQEFTPPASAAEIEGTWRVSTATELLQVHINFLRGKVRLILLDAQACQQDVS</sequence>
<gene>
    <name type="primary">epo</name>
</gene>
<evidence type="ECO:0000250" key="1"/>
<evidence type="ECO:0000255" key="2"/>
<evidence type="ECO:0000269" key="3">
    <source>
    </source>
</evidence>
<evidence type="ECO:0000305" key="4"/>
<proteinExistence type="evidence at transcript level"/>
<organism>
    <name type="scientific">Takifugu rubripes</name>
    <name type="common">Japanese pufferfish</name>
    <name type="synonym">Fugu rubripes</name>
    <dbReference type="NCBI Taxonomy" id="31033"/>
    <lineage>
        <taxon>Eukaryota</taxon>
        <taxon>Metazoa</taxon>
        <taxon>Chordata</taxon>
        <taxon>Craniata</taxon>
        <taxon>Vertebrata</taxon>
        <taxon>Euteleostomi</taxon>
        <taxon>Actinopterygii</taxon>
        <taxon>Neopterygii</taxon>
        <taxon>Teleostei</taxon>
        <taxon>Neoteleostei</taxon>
        <taxon>Acanthomorphata</taxon>
        <taxon>Eupercaria</taxon>
        <taxon>Tetraodontiformes</taxon>
        <taxon>Tetradontoidea</taxon>
        <taxon>Tetraodontidae</taxon>
        <taxon>Takifugu</taxon>
    </lineage>
</organism>
<feature type="signal peptide" evidence="2">
    <location>
        <begin position="1"/>
        <end position="25"/>
    </location>
</feature>
<feature type="chain" id="PRO_0000313667" description="Erythropoietin">
    <location>
        <begin position="26"/>
        <end position="185"/>
    </location>
</feature>
<feature type="disulfide bond" evidence="1">
    <location>
        <begin position="32"/>
        <end position="180"/>
    </location>
</feature>
<feature type="disulfide bond" evidence="1">
    <location>
        <begin position="54"/>
        <end position="58"/>
    </location>
</feature>
<feature type="splice variant" id="VSP_030095" description="In isoform 2." evidence="4">
    <original>MLQKTGRG</original>
    <variation>MEFPR</variation>
    <location>
        <begin position="1"/>
        <end position="8"/>
    </location>
</feature>
<name>EPO_TAKRU</name>
<dbReference type="EMBL" id="AY303753">
    <property type="protein sequence ID" value="AAQ72466.1"/>
    <property type="molecule type" value="Genomic_DNA"/>
</dbReference>
<dbReference type="EMBL" id="AY303753">
    <property type="protein sequence ID" value="AAQ72467.1"/>
    <property type="molecule type" value="Genomic_DNA"/>
</dbReference>
<dbReference type="RefSeq" id="XP_029696491.1">
    <molecule id="Q6JV22-1"/>
    <property type="nucleotide sequence ID" value="XM_029840631.1"/>
</dbReference>
<dbReference type="SMR" id="Q6JV22"/>
<dbReference type="FunCoup" id="Q6JV22">
    <property type="interactions" value="613"/>
</dbReference>
<dbReference type="STRING" id="31033.ENSTRUP00000069601"/>
<dbReference type="Ensembl" id="ENSTRUT00000068811.1">
    <molecule id="Q6JV22-1"/>
    <property type="protein sequence ID" value="ENSTRUP00000069601.1"/>
    <property type="gene ID" value="ENSTRUG00000029744.1"/>
</dbReference>
<dbReference type="GeneID" id="115250748"/>
<dbReference type="GeneTree" id="ENSGT00390000017226"/>
<dbReference type="HOGENOM" id="CLU_2660853_0_0_1"/>
<dbReference type="InParanoid" id="Q6JV22"/>
<dbReference type="OMA" id="AMEFPRL"/>
<dbReference type="Proteomes" id="UP000005226">
    <property type="component" value="Chromosome 8"/>
</dbReference>
<dbReference type="GO" id="GO:0005615">
    <property type="term" value="C:extracellular space"/>
    <property type="evidence" value="ECO:0007669"/>
    <property type="project" value="TreeGrafter"/>
</dbReference>
<dbReference type="GO" id="GO:0048471">
    <property type="term" value="C:perinuclear region of cytoplasm"/>
    <property type="evidence" value="ECO:0007669"/>
    <property type="project" value="Ensembl"/>
</dbReference>
<dbReference type="GO" id="GO:0005125">
    <property type="term" value="F:cytokine activity"/>
    <property type="evidence" value="ECO:0007669"/>
    <property type="project" value="TreeGrafter"/>
</dbReference>
<dbReference type="GO" id="GO:0005128">
    <property type="term" value="F:erythropoietin receptor binding"/>
    <property type="evidence" value="ECO:0007669"/>
    <property type="project" value="InterPro"/>
</dbReference>
<dbReference type="GO" id="GO:0005179">
    <property type="term" value="F:hormone activity"/>
    <property type="evidence" value="ECO:0007669"/>
    <property type="project" value="UniProtKB-KW"/>
</dbReference>
<dbReference type="GO" id="GO:0043249">
    <property type="term" value="P:erythrocyte maturation"/>
    <property type="evidence" value="ECO:0007669"/>
    <property type="project" value="UniProtKB-KW"/>
</dbReference>
<dbReference type="GO" id="GO:0048823">
    <property type="term" value="P:nucleate erythrocyte development"/>
    <property type="evidence" value="ECO:0007669"/>
    <property type="project" value="Ensembl"/>
</dbReference>
<dbReference type="GO" id="GO:0048793">
    <property type="term" value="P:pronephros development"/>
    <property type="evidence" value="ECO:0007669"/>
    <property type="project" value="Ensembl"/>
</dbReference>
<dbReference type="GO" id="GO:0014823">
    <property type="term" value="P:response to activity"/>
    <property type="evidence" value="ECO:0007669"/>
    <property type="project" value="Ensembl"/>
</dbReference>
<dbReference type="Gene3D" id="1.20.1250.10">
    <property type="match status" value="1"/>
</dbReference>
<dbReference type="InterPro" id="IPR009079">
    <property type="entry name" value="4_helix_cytokine-like_core"/>
</dbReference>
<dbReference type="InterPro" id="IPR001323">
    <property type="entry name" value="EPO_TPO"/>
</dbReference>
<dbReference type="InterPro" id="IPR003013">
    <property type="entry name" value="Erythroptn"/>
</dbReference>
<dbReference type="PANTHER" id="PTHR10370">
    <property type="entry name" value="ERYTHROPOIETIN"/>
    <property type="match status" value="1"/>
</dbReference>
<dbReference type="PANTHER" id="PTHR10370:SF0">
    <property type="entry name" value="ERYTHROPOIETIN"/>
    <property type="match status" value="1"/>
</dbReference>
<dbReference type="Pfam" id="PF00758">
    <property type="entry name" value="EPO_TPO"/>
    <property type="match status" value="1"/>
</dbReference>
<dbReference type="PIRSF" id="PIRSF001951">
    <property type="entry name" value="EPO"/>
    <property type="match status" value="1"/>
</dbReference>
<dbReference type="PRINTS" id="PR00272">
    <property type="entry name" value="ERYTHROPTN"/>
</dbReference>
<dbReference type="SUPFAM" id="SSF47266">
    <property type="entry name" value="4-helical cytokines"/>
    <property type="match status" value="1"/>
</dbReference>